<name>PYRG_ZYMMO</name>
<proteinExistence type="inferred from homology"/>
<organism>
    <name type="scientific">Zymomonas mobilis subsp. mobilis (strain ATCC 31821 / ZM4 / CP4)</name>
    <dbReference type="NCBI Taxonomy" id="264203"/>
    <lineage>
        <taxon>Bacteria</taxon>
        <taxon>Pseudomonadati</taxon>
        <taxon>Pseudomonadota</taxon>
        <taxon>Alphaproteobacteria</taxon>
        <taxon>Sphingomonadales</taxon>
        <taxon>Zymomonadaceae</taxon>
        <taxon>Zymomonas</taxon>
    </lineage>
</organism>
<evidence type="ECO:0000255" key="1">
    <source>
        <dbReference type="HAMAP-Rule" id="MF_01227"/>
    </source>
</evidence>
<accession>Q5NQB9</accession>
<dbReference type="EC" id="6.3.4.2" evidence="1"/>
<dbReference type="EMBL" id="AE008692">
    <property type="protein sequence ID" value="AAV89086.1"/>
    <property type="molecule type" value="Genomic_DNA"/>
</dbReference>
<dbReference type="RefSeq" id="WP_011240370.1">
    <property type="nucleotide sequence ID" value="NZ_CP035711.1"/>
</dbReference>
<dbReference type="SMR" id="Q5NQB9"/>
<dbReference type="STRING" id="264203.ZMO0462"/>
<dbReference type="KEGG" id="zmo:ZMO0462"/>
<dbReference type="eggNOG" id="COG0504">
    <property type="taxonomic scope" value="Bacteria"/>
</dbReference>
<dbReference type="HOGENOM" id="CLU_011675_5_0_5"/>
<dbReference type="UniPathway" id="UPA00159">
    <property type="reaction ID" value="UER00277"/>
</dbReference>
<dbReference type="Proteomes" id="UP000001173">
    <property type="component" value="Chromosome"/>
</dbReference>
<dbReference type="GO" id="GO:0005829">
    <property type="term" value="C:cytosol"/>
    <property type="evidence" value="ECO:0007669"/>
    <property type="project" value="TreeGrafter"/>
</dbReference>
<dbReference type="GO" id="GO:0005524">
    <property type="term" value="F:ATP binding"/>
    <property type="evidence" value="ECO:0007669"/>
    <property type="project" value="UniProtKB-KW"/>
</dbReference>
<dbReference type="GO" id="GO:0003883">
    <property type="term" value="F:CTP synthase activity"/>
    <property type="evidence" value="ECO:0007669"/>
    <property type="project" value="UniProtKB-UniRule"/>
</dbReference>
<dbReference type="GO" id="GO:0004359">
    <property type="term" value="F:glutaminase activity"/>
    <property type="evidence" value="ECO:0007669"/>
    <property type="project" value="RHEA"/>
</dbReference>
<dbReference type="GO" id="GO:0042802">
    <property type="term" value="F:identical protein binding"/>
    <property type="evidence" value="ECO:0007669"/>
    <property type="project" value="TreeGrafter"/>
</dbReference>
<dbReference type="GO" id="GO:0046872">
    <property type="term" value="F:metal ion binding"/>
    <property type="evidence" value="ECO:0007669"/>
    <property type="project" value="UniProtKB-KW"/>
</dbReference>
<dbReference type="GO" id="GO:0044210">
    <property type="term" value="P:'de novo' CTP biosynthetic process"/>
    <property type="evidence" value="ECO:0007669"/>
    <property type="project" value="UniProtKB-UniRule"/>
</dbReference>
<dbReference type="GO" id="GO:0019856">
    <property type="term" value="P:pyrimidine nucleobase biosynthetic process"/>
    <property type="evidence" value="ECO:0007669"/>
    <property type="project" value="TreeGrafter"/>
</dbReference>
<dbReference type="CDD" id="cd03113">
    <property type="entry name" value="CTPS_N"/>
    <property type="match status" value="1"/>
</dbReference>
<dbReference type="CDD" id="cd01746">
    <property type="entry name" value="GATase1_CTP_Synthase"/>
    <property type="match status" value="1"/>
</dbReference>
<dbReference type="FunFam" id="3.40.50.300:FF:000009">
    <property type="entry name" value="CTP synthase"/>
    <property type="match status" value="1"/>
</dbReference>
<dbReference type="FunFam" id="3.40.50.880:FF:000002">
    <property type="entry name" value="CTP synthase"/>
    <property type="match status" value="1"/>
</dbReference>
<dbReference type="Gene3D" id="3.40.50.880">
    <property type="match status" value="1"/>
</dbReference>
<dbReference type="Gene3D" id="3.40.50.300">
    <property type="entry name" value="P-loop containing nucleotide triphosphate hydrolases"/>
    <property type="match status" value="1"/>
</dbReference>
<dbReference type="HAMAP" id="MF_01227">
    <property type="entry name" value="PyrG"/>
    <property type="match status" value="1"/>
</dbReference>
<dbReference type="InterPro" id="IPR029062">
    <property type="entry name" value="Class_I_gatase-like"/>
</dbReference>
<dbReference type="InterPro" id="IPR004468">
    <property type="entry name" value="CTP_synthase"/>
</dbReference>
<dbReference type="InterPro" id="IPR017456">
    <property type="entry name" value="CTP_synthase_N"/>
</dbReference>
<dbReference type="InterPro" id="IPR017926">
    <property type="entry name" value="GATASE"/>
</dbReference>
<dbReference type="InterPro" id="IPR033828">
    <property type="entry name" value="GATase1_CTP_Synthase"/>
</dbReference>
<dbReference type="InterPro" id="IPR027417">
    <property type="entry name" value="P-loop_NTPase"/>
</dbReference>
<dbReference type="NCBIfam" id="NF003792">
    <property type="entry name" value="PRK05380.1"/>
    <property type="match status" value="1"/>
</dbReference>
<dbReference type="NCBIfam" id="TIGR00337">
    <property type="entry name" value="PyrG"/>
    <property type="match status" value="1"/>
</dbReference>
<dbReference type="PANTHER" id="PTHR11550">
    <property type="entry name" value="CTP SYNTHASE"/>
    <property type="match status" value="1"/>
</dbReference>
<dbReference type="PANTHER" id="PTHR11550:SF0">
    <property type="entry name" value="CTP SYNTHASE-RELATED"/>
    <property type="match status" value="1"/>
</dbReference>
<dbReference type="Pfam" id="PF06418">
    <property type="entry name" value="CTP_synth_N"/>
    <property type="match status" value="1"/>
</dbReference>
<dbReference type="Pfam" id="PF00117">
    <property type="entry name" value="GATase"/>
    <property type="match status" value="1"/>
</dbReference>
<dbReference type="SUPFAM" id="SSF52317">
    <property type="entry name" value="Class I glutamine amidotransferase-like"/>
    <property type="match status" value="1"/>
</dbReference>
<dbReference type="SUPFAM" id="SSF52540">
    <property type="entry name" value="P-loop containing nucleoside triphosphate hydrolases"/>
    <property type="match status" value="1"/>
</dbReference>
<dbReference type="PROSITE" id="PS51273">
    <property type="entry name" value="GATASE_TYPE_1"/>
    <property type="match status" value="1"/>
</dbReference>
<feature type="chain" id="PRO_0000266270" description="CTP synthase">
    <location>
        <begin position="1"/>
        <end position="544"/>
    </location>
</feature>
<feature type="domain" description="Glutamine amidotransferase type-1" evidence="1">
    <location>
        <begin position="291"/>
        <end position="543"/>
    </location>
</feature>
<feature type="region of interest" description="Amidoligase domain" evidence="1">
    <location>
        <begin position="1"/>
        <end position="265"/>
    </location>
</feature>
<feature type="active site" description="Nucleophile; for glutamine hydrolysis" evidence="1">
    <location>
        <position position="382"/>
    </location>
</feature>
<feature type="active site" evidence="1">
    <location>
        <position position="516"/>
    </location>
</feature>
<feature type="active site" evidence="1">
    <location>
        <position position="518"/>
    </location>
</feature>
<feature type="binding site" evidence="1">
    <location>
        <position position="13"/>
    </location>
    <ligand>
        <name>CTP</name>
        <dbReference type="ChEBI" id="CHEBI:37563"/>
        <note>allosteric inhibitor</note>
    </ligand>
</feature>
<feature type="binding site" evidence="1">
    <location>
        <position position="13"/>
    </location>
    <ligand>
        <name>UTP</name>
        <dbReference type="ChEBI" id="CHEBI:46398"/>
    </ligand>
</feature>
<feature type="binding site" evidence="1">
    <location>
        <begin position="14"/>
        <end position="19"/>
    </location>
    <ligand>
        <name>ATP</name>
        <dbReference type="ChEBI" id="CHEBI:30616"/>
    </ligand>
</feature>
<feature type="binding site" evidence="1">
    <location>
        <position position="54"/>
    </location>
    <ligand>
        <name>L-glutamine</name>
        <dbReference type="ChEBI" id="CHEBI:58359"/>
    </ligand>
</feature>
<feature type="binding site" evidence="1">
    <location>
        <position position="71"/>
    </location>
    <ligand>
        <name>ATP</name>
        <dbReference type="ChEBI" id="CHEBI:30616"/>
    </ligand>
</feature>
<feature type="binding site" evidence="1">
    <location>
        <position position="71"/>
    </location>
    <ligand>
        <name>Mg(2+)</name>
        <dbReference type="ChEBI" id="CHEBI:18420"/>
    </ligand>
</feature>
<feature type="binding site" evidence="1">
    <location>
        <position position="139"/>
    </location>
    <ligand>
        <name>Mg(2+)</name>
        <dbReference type="ChEBI" id="CHEBI:18420"/>
    </ligand>
</feature>
<feature type="binding site" evidence="1">
    <location>
        <begin position="146"/>
        <end position="148"/>
    </location>
    <ligand>
        <name>CTP</name>
        <dbReference type="ChEBI" id="CHEBI:37563"/>
        <note>allosteric inhibitor</note>
    </ligand>
</feature>
<feature type="binding site" evidence="1">
    <location>
        <begin position="186"/>
        <end position="191"/>
    </location>
    <ligand>
        <name>CTP</name>
        <dbReference type="ChEBI" id="CHEBI:37563"/>
        <note>allosteric inhibitor</note>
    </ligand>
</feature>
<feature type="binding site" evidence="1">
    <location>
        <begin position="186"/>
        <end position="191"/>
    </location>
    <ligand>
        <name>UTP</name>
        <dbReference type="ChEBI" id="CHEBI:46398"/>
    </ligand>
</feature>
<feature type="binding site" evidence="1">
    <location>
        <position position="222"/>
    </location>
    <ligand>
        <name>CTP</name>
        <dbReference type="ChEBI" id="CHEBI:37563"/>
        <note>allosteric inhibitor</note>
    </ligand>
</feature>
<feature type="binding site" evidence="1">
    <location>
        <position position="222"/>
    </location>
    <ligand>
        <name>UTP</name>
        <dbReference type="ChEBI" id="CHEBI:46398"/>
    </ligand>
</feature>
<feature type="binding site" evidence="1">
    <location>
        <position position="355"/>
    </location>
    <ligand>
        <name>L-glutamine</name>
        <dbReference type="ChEBI" id="CHEBI:58359"/>
    </ligand>
</feature>
<feature type="binding site" evidence="1">
    <location>
        <begin position="383"/>
        <end position="386"/>
    </location>
    <ligand>
        <name>L-glutamine</name>
        <dbReference type="ChEBI" id="CHEBI:58359"/>
    </ligand>
</feature>
<feature type="binding site" evidence="1">
    <location>
        <position position="406"/>
    </location>
    <ligand>
        <name>L-glutamine</name>
        <dbReference type="ChEBI" id="CHEBI:58359"/>
    </ligand>
</feature>
<feature type="binding site" evidence="1">
    <location>
        <position position="471"/>
    </location>
    <ligand>
        <name>L-glutamine</name>
        <dbReference type="ChEBI" id="CHEBI:58359"/>
    </ligand>
</feature>
<keyword id="KW-0067">ATP-binding</keyword>
<keyword id="KW-0315">Glutamine amidotransferase</keyword>
<keyword id="KW-0436">Ligase</keyword>
<keyword id="KW-0460">Magnesium</keyword>
<keyword id="KW-0479">Metal-binding</keyword>
<keyword id="KW-0547">Nucleotide-binding</keyword>
<keyword id="KW-0665">Pyrimidine biosynthesis</keyword>
<keyword id="KW-1185">Reference proteome</keyword>
<comment type="function">
    <text evidence="1">Catalyzes the ATP-dependent amination of UTP to CTP with either L-glutamine or ammonia as the source of nitrogen. Regulates intracellular CTP levels through interactions with the four ribonucleotide triphosphates.</text>
</comment>
<comment type="catalytic activity">
    <reaction evidence="1">
        <text>UTP + L-glutamine + ATP + H2O = CTP + L-glutamate + ADP + phosphate + 2 H(+)</text>
        <dbReference type="Rhea" id="RHEA:26426"/>
        <dbReference type="ChEBI" id="CHEBI:15377"/>
        <dbReference type="ChEBI" id="CHEBI:15378"/>
        <dbReference type="ChEBI" id="CHEBI:29985"/>
        <dbReference type="ChEBI" id="CHEBI:30616"/>
        <dbReference type="ChEBI" id="CHEBI:37563"/>
        <dbReference type="ChEBI" id="CHEBI:43474"/>
        <dbReference type="ChEBI" id="CHEBI:46398"/>
        <dbReference type="ChEBI" id="CHEBI:58359"/>
        <dbReference type="ChEBI" id="CHEBI:456216"/>
        <dbReference type="EC" id="6.3.4.2"/>
    </reaction>
</comment>
<comment type="catalytic activity">
    <reaction evidence="1">
        <text>L-glutamine + H2O = L-glutamate + NH4(+)</text>
        <dbReference type="Rhea" id="RHEA:15889"/>
        <dbReference type="ChEBI" id="CHEBI:15377"/>
        <dbReference type="ChEBI" id="CHEBI:28938"/>
        <dbReference type="ChEBI" id="CHEBI:29985"/>
        <dbReference type="ChEBI" id="CHEBI:58359"/>
    </reaction>
</comment>
<comment type="catalytic activity">
    <reaction evidence="1">
        <text>UTP + NH4(+) + ATP = CTP + ADP + phosphate + 2 H(+)</text>
        <dbReference type="Rhea" id="RHEA:16597"/>
        <dbReference type="ChEBI" id="CHEBI:15378"/>
        <dbReference type="ChEBI" id="CHEBI:28938"/>
        <dbReference type="ChEBI" id="CHEBI:30616"/>
        <dbReference type="ChEBI" id="CHEBI:37563"/>
        <dbReference type="ChEBI" id="CHEBI:43474"/>
        <dbReference type="ChEBI" id="CHEBI:46398"/>
        <dbReference type="ChEBI" id="CHEBI:456216"/>
    </reaction>
</comment>
<comment type="activity regulation">
    <text evidence="1">Allosterically activated by GTP, when glutamine is the substrate; GTP has no effect on the reaction when ammonia is the substrate. The allosteric effector GTP functions by stabilizing the protein conformation that binds the tetrahedral intermediate(s) formed during glutamine hydrolysis. Inhibited by the product CTP, via allosteric rather than competitive inhibition.</text>
</comment>
<comment type="pathway">
    <text evidence="1">Pyrimidine metabolism; CTP biosynthesis via de novo pathway; CTP from UDP: step 2/2.</text>
</comment>
<comment type="subunit">
    <text evidence="1">Homotetramer.</text>
</comment>
<comment type="miscellaneous">
    <text evidence="1">CTPSs have evolved a hybrid strategy for distinguishing between UTP and CTP. The overlapping regions of the product feedback inhibitory and substrate sites recognize a common feature in both compounds, the triphosphate moiety. To differentiate isosteric substrate and product pyrimidine rings, an additional pocket far from the expected kinase/ligase catalytic site, specifically recognizes the cytosine and ribose portions of the product inhibitor.</text>
</comment>
<comment type="similarity">
    <text evidence="1">Belongs to the CTP synthase family.</text>
</comment>
<reference key="1">
    <citation type="journal article" date="2005" name="Nat. Biotechnol.">
        <title>The genome sequence of the ethanologenic bacterium Zymomonas mobilis ZM4.</title>
        <authorList>
            <person name="Seo J.-S."/>
            <person name="Chong H."/>
            <person name="Park H.S."/>
            <person name="Yoon K.-O."/>
            <person name="Jung C."/>
            <person name="Kim J.J."/>
            <person name="Hong J.H."/>
            <person name="Kim H."/>
            <person name="Kim J.-H."/>
            <person name="Kil J.-I."/>
            <person name="Park C.J."/>
            <person name="Oh H.-M."/>
            <person name="Lee J.-S."/>
            <person name="Jin S.-J."/>
            <person name="Um H.-W."/>
            <person name="Lee H.-J."/>
            <person name="Oh S.-J."/>
            <person name="Kim J.Y."/>
            <person name="Kang H.L."/>
            <person name="Lee S.Y."/>
            <person name="Lee K.J."/>
            <person name="Kang H.S."/>
        </authorList>
    </citation>
    <scope>NUCLEOTIDE SEQUENCE [LARGE SCALE GENOMIC DNA]</scope>
    <source>
        <strain>ATCC 31821 / ZM4 / CP4</strain>
    </source>
</reference>
<sequence>MARFIFITGGVVSSLGKGLMAASLAALLQERGFRVRIRKFDPYLNVDPGTMSPYQHGEVYVTDDGAETDLDLGHYERFSGVPSRRSDNITSGRIYQNIIAKERRGDYLGATVQVIPHVTDAIKDFARDDTDDLDFVLCEIGGTVGDIESLPFIEAIRQLKNDLGRGNVVFVHLTLVPYIAAAGELKTKPTQHSVRDLTSFGIQPDVLVCRTEHPLPDSERSKIALFCNVPKEAVIPALDAKSIYDVPLHYHAEGLDKAVLSAFGLNIETPLDLHRWKEISDRLANPEGEVTIGVVGKYVGLQDAYKSLHEALVHGGIANRVKVNIVWLDAEMFEGNNPEAAEALSSLHAILVPGGFGERGSEGKIAAVKFAREHKVPFFGICLGMQMACIEGARNTAGLKKASSSEFGPSEEPVIGLITEWERDGEREERAADGDLGGTMRLGAYPAVLKAGSQVAEIYNSREITERHRHRYEVNIHYKEPLEKGGLVFSGMSPDGLLPEIVERPDHPWFIGVQFHPELKSKPFDPHPLFSDFVAAALKQSRLV</sequence>
<protein>
    <recommendedName>
        <fullName evidence="1">CTP synthase</fullName>
        <ecNumber evidence="1">6.3.4.2</ecNumber>
    </recommendedName>
    <alternativeName>
        <fullName evidence="1">Cytidine 5'-triphosphate synthase</fullName>
    </alternativeName>
    <alternativeName>
        <fullName evidence="1">Cytidine triphosphate synthetase</fullName>
        <shortName evidence="1">CTP synthetase</shortName>
        <shortName evidence="1">CTPS</shortName>
    </alternativeName>
    <alternativeName>
        <fullName evidence="1">UTP--ammonia ligase</fullName>
    </alternativeName>
</protein>
<gene>
    <name evidence="1" type="primary">pyrG</name>
    <name type="ordered locus">ZMO0462</name>
</gene>